<comment type="function">
    <text evidence="1">This protein is involved in the repair of mismatches in DNA. It is required for dam-dependent methyl-directed DNA mismatch repair. May act as a 'molecular matchmaker', a protein that promotes the formation of a stable complex between two or more DNA-binding proteins in an ATP-dependent manner without itself being part of a final effector complex.</text>
</comment>
<comment type="similarity">
    <text evidence="1">Belongs to the DNA mismatch repair MutL/HexB family.</text>
</comment>
<sequence>MTIQILPPQLANQIAAGEVVERPASVIKELVENSLDAGATRVDIEIEKGGSKLIKIHDNGSGISKEDLGLALSRHATSKLSSLDDLDAILSFGFRGEALASISSVSRLTLTSRTADQVEAWQAYAEGSDMAVKVIPAAHPVGSTVEAVDLFFNTPARRRFLKSDKTEFTHIDEWLKRIALVRSDIHFTLKHNGKVVRNYRATNTQDQYLQRLAQISGKKFAEQAIEINCQHDDLKLTGYVQSPFFETPASDTQYFYVNGRLVRDRLVNHAVRQAFAEHETGEQASYVLMLELDPHQVDVNVHPAKHEVRFHQSRYVHDYIFQALQSALHQVGRLAIDSDNKLDTDSHSQSHERGHSAYGVAEPSHSRHDYSHQTAPSTKASTETNRERFSSPISAVPSHTSDVQSRGGATSSYRQQAELPSAAAIASYAELLKTPDVDQGNRGNKELQANVSMPPILAGQYWVLTQEEQLLLLPVRIISTWLLQHEISNKLDSGLVSQPLLMPVSISMDETWSDTLAERELLLRKIGIEVTIRLGQLIIKKVPPYLRQSQLVAVIPDLLQWLRFEEPSNEALASWLAKHDDKRFESAPDTWLAFSQLDDNVQDELIKKAKVLPWQSWLEEYPSD</sequence>
<organism>
    <name type="scientific">Shewanella sediminis (strain HAW-EB3)</name>
    <dbReference type="NCBI Taxonomy" id="425104"/>
    <lineage>
        <taxon>Bacteria</taxon>
        <taxon>Pseudomonadati</taxon>
        <taxon>Pseudomonadota</taxon>
        <taxon>Gammaproteobacteria</taxon>
        <taxon>Alteromonadales</taxon>
        <taxon>Shewanellaceae</taxon>
        <taxon>Shewanella</taxon>
    </lineage>
</organism>
<reference key="1">
    <citation type="submission" date="2007-08" db="EMBL/GenBank/DDBJ databases">
        <title>Complete sequence of Shewanella sediminis HAW-EB3.</title>
        <authorList>
            <consortium name="US DOE Joint Genome Institute"/>
            <person name="Copeland A."/>
            <person name="Lucas S."/>
            <person name="Lapidus A."/>
            <person name="Barry K."/>
            <person name="Glavina del Rio T."/>
            <person name="Dalin E."/>
            <person name="Tice H."/>
            <person name="Pitluck S."/>
            <person name="Chertkov O."/>
            <person name="Brettin T."/>
            <person name="Bruce D."/>
            <person name="Detter J.C."/>
            <person name="Han C."/>
            <person name="Schmutz J."/>
            <person name="Larimer F."/>
            <person name="Land M."/>
            <person name="Hauser L."/>
            <person name="Kyrpides N."/>
            <person name="Kim E."/>
            <person name="Zhao J.-S."/>
            <person name="Richardson P."/>
        </authorList>
    </citation>
    <scope>NUCLEOTIDE SEQUENCE [LARGE SCALE GENOMIC DNA]</scope>
    <source>
        <strain>HAW-EB3</strain>
    </source>
</reference>
<accession>A8FRD3</accession>
<protein>
    <recommendedName>
        <fullName evidence="1">DNA mismatch repair protein MutL</fullName>
    </recommendedName>
</protein>
<gene>
    <name evidence="1" type="primary">mutL</name>
    <name type="ordered locus">Ssed_0795</name>
</gene>
<dbReference type="EMBL" id="CP000821">
    <property type="protein sequence ID" value="ABV35406.1"/>
    <property type="molecule type" value="Genomic_DNA"/>
</dbReference>
<dbReference type="RefSeq" id="WP_012141142.1">
    <property type="nucleotide sequence ID" value="NC_009831.1"/>
</dbReference>
<dbReference type="SMR" id="A8FRD3"/>
<dbReference type="STRING" id="425104.Ssed_0795"/>
<dbReference type="KEGG" id="sse:Ssed_0795"/>
<dbReference type="eggNOG" id="COG0323">
    <property type="taxonomic scope" value="Bacteria"/>
</dbReference>
<dbReference type="HOGENOM" id="CLU_004131_5_1_6"/>
<dbReference type="OrthoDB" id="9763467at2"/>
<dbReference type="Proteomes" id="UP000002015">
    <property type="component" value="Chromosome"/>
</dbReference>
<dbReference type="GO" id="GO:0032300">
    <property type="term" value="C:mismatch repair complex"/>
    <property type="evidence" value="ECO:0007669"/>
    <property type="project" value="InterPro"/>
</dbReference>
<dbReference type="GO" id="GO:0005524">
    <property type="term" value="F:ATP binding"/>
    <property type="evidence" value="ECO:0007669"/>
    <property type="project" value="InterPro"/>
</dbReference>
<dbReference type="GO" id="GO:0016887">
    <property type="term" value="F:ATP hydrolysis activity"/>
    <property type="evidence" value="ECO:0007669"/>
    <property type="project" value="InterPro"/>
</dbReference>
<dbReference type="GO" id="GO:0140664">
    <property type="term" value="F:ATP-dependent DNA damage sensor activity"/>
    <property type="evidence" value="ECO:0007669"/>
    <property type="project" value="InterPro"/>
</dbReference>
<dbReference type="GO" id="GO:0030983">
    <property type="term" value="F:mismatched DNA binding"/>
    <property type="evidence" value="ECO:0007669"/>
    <property type="project" value="InterPro"/>
</dbReference>
<dbReference type="GO" id="GO:0006298">
    <property type="term" value="P:mismatch repair"/>
    <property type="evidence" value="ECO:0007669"/>
    <property type="project" value="UniProtKB-UniRule"/>
</dbReference>
<dbReference type="CDD" id="cd16926">
    <property type="entry name" value="HATPase_MutL-MLH-PMS-like"/>
    <property type="match status" value="1"/>
</dbReference>
<dbReference type="CDD" id="cd03482">
    <property type="entry name" value="MutL_Trans_MutL"/>
    <property type="match status" value="1"/>
</dbReference>
<dbReference type="FunFam" id="3.30.230.10:FF:000013">
    <property type="entry name" value="DNA mismatch repair endonuclease MutL"/>
    <property type="match status" value="1"/>
</dbReference>
<dbReference type="FunFam" id="3.30.565.10:FF:000003">
    <property type="entry name" value="DNA mismatch repair endonuclease MutL"/>
    <property type="match status" value="1"/>
</dbReference>
<dbReference type="Gene3D" id="3.30.230.10">
    <property type="match status" value="1"/>
</dbReference>
<dbReference type="Gene3D" id="3.30.565.10">
    <property type="entry name" value="Histidine kinase-like ATPase, C-terminal domain"/>
    <property type="match status" value="1"/>
</dbReference>
<dbReference type="Gene3D" id="3.30.1540.20">
    <property type="entry name" value="MutL, C-terminal domain, dimerisation subdomain"/>
    <property type="match status" value="1"/>
</dbReference>
<dbReference type="Gene3D" id="3.30.1370.100">
    <property type="entry name" value="MutL, C-terminal domain, regulatory subdomain"/>
    <property type="match status" value="1"/>
</dbReference>
<dbReference type="HAMAP" id="MF_00149">
    <property type="entry name" value="DNA_mis_repair"/>
    <property type="match status" value="1"/>
</dbReference>
<dbReference type="InterPro" id="IPR014762">
    <property type="entry name" value="DNA_mismatch_repair_CS"/>
</dbReference>
<dbReference type="InterPro" id="IPR020667">
    <property type="entry name" value="DNA_mismatch_repair_MutL"/>
</dbReference>
<dbReference type="InterPro" id="IPR013507">
    <property type="entry name" value="DNA_mismatch_S5_2-like"/>
</dbReference>
<dbReference type="InterPro" id="IPR036890">
    <property type="entry name" value="HATPase_C_sf"/>
</dbReference>
<dbReference type="InterPro" id="IPR002099">
    <property type="entry name" value="MutL/Mlh/PMS"/>
</dbReference>
<dbReference type="InterPro" id="IPR038973">
    <property type="entry name" value="MutL/Mlh/Pms-like"/>
</dbReference>
<dbReference type="InterPro" id="IPR014790">
    <property type="entry name" value="MutL_C"/>
</dbReference>
<dbReference type="InterPro" id="IPR042120">
    <property type="entry name" value="MutL_C_dimsub"/>
</dbReference>
<dbReference type="InterPro" id="IPR042121">
    <property type="entry name" value="MutL_C_regsub"/>
</dbReference>
<dbReference type="InterPro" id="IPR037198">
    <property type="entry name" value="MutL_C_sf"/>
</dbReference>
<dbReference type="InterPro" id="IPR020568">
    <property type="entry name" value="Ribosomal_Su5_D2-typ_SF"/>
</dbReference>
<dbReference type="InterPro" id="IPR014721">
    <property type="entry name" value="Ribsml_uS5_D2-typ_fold_subgr"/>
</dbReference>
<dbReference type="NCBIfam" id="TIGR00585">
    <property type="entry name" value="mutl"/>
    <property type="match status" value="1"/>
</dbReference>
<dbReference type="NCBIfam" id="NF000948">
    <property type="entry name" value="PRK00095.1-1"/>
    <property type="match status" value="1"/>
</dbReference>
<dbReference type="PANTHER" id="PTHR10073">
    <property type="entry name" value="DNA MISMATCH REPAIR PROTEIN MLH, PMS, MUTL"/>
    <property type="match status" value="1"/>
</dbReference>
<dbReference type="PANTHER" id="PTHR10073:SF12">
    <property type="entry name" value="DNA MISMATCH REPAIR PROTEIN MLH1"/>
    <property type="match status" value="1"/>
</dbReference>
<dbReference type="Pfam" id="PF01119">
    <property type="entry name" value="DNA_mis_repair"/>
    <property type="match status" value="1"/>
</dbReference>
<dbReference type="Pfam" id="PF13589">
    <property type="entry name" value="HATPase_c_3"/>
    <property type="match status" value="1"/>
</dbReference>
<dbReference type="Pfam" id="PF08676">
    <property type="entry name" value="MutL_C"/>
    <property type="match status" value="1"/>
</dbReference>
<dbReference type="SMART" id="SM01340">
    <property type="entry name" value="DNA_mis_repair"/>
    <property type="match status" value="1"/>
</dbReference>
<dbReference type="SMART" id="SM00853">
    <property type="entry name" value="MutL_C"/>
    <property type="match status" value="1"/>
</dbReference>
<dbReference type="SUPFAM" id="SSF55874">
    <property type="entry name" value="ATPase domain of HSP90 chaperone/DNA topoisomerase II/histidine kinase"/>
    <property type="match status" value="1"/>
</dbReference>
<dbReference type="SUPFAM" id="SSF118116">
    <property type="entry name" value="DNA mismatch repair protein MutL"/>
    <property type="match status" value="1"/>
</dbReference>
<dbReference type="SUPFAM" id="SSF54211">
    <property type="entry name" value="Ribosomal protein S5 domain 2-like"/>
    <property type="match status" value="1"/>
</dbReference>
<dbReference type="PROSITE" id="PS00058">
    <property type="entry name" value="DNA_MISMATCH_REPAIR_1"/>
    <property type="match status" value="1"/>
</dbReference>
<feature type="chain" id="PRO_1000076718" description="DNA mismatch repair protein MutL">
    <location>
        <begin position="1"/>
        <end position="624"/>
    </location>
</feature>
<feature type="region of interest" description="Disordered" evidence="2">
    <location>
        <begin position="340"/>
        <end position="415"/>
    </location>
</feature>
<feature type="compositionally biased region" description="Basic and acidic residues" evidence="2">
    <location>
        <begin position="340"/>
        <end position="355"/>
    </location>
</feature>
<feature type="compositionally biased region" description="Polar residues" evidence="2">
    <location>
        <begin position="372"/>
        <end position="383"/>
    </location>
</feature>
<feature type="compositionally biased region" description="Polar residues" evidence="2">
    <location>
        <begin position="391"/>
        <end position="415"/>
    </location>
</feature>
<evidence type="ECO:0000255" key="1">
    <source>
        <dbReference type="HAMAP-Rule" id="MF_00149"/>
    </source>
</evidence>
<evidence type="ECO:0000256" key="2">
    <source>
        <dbReference type="SAM" id="MobiDB-lite"/>
    </source>
</evidence>
<keyword id="KW-0227">DNA damage</keyword>
<keyword id="KW-0234">DNA repair</keyword>
<keyword id="KW-1185">Reference proteome</keyword>
<proteinExistence type="inferred from homology"/>
<name>MUTL_SHESH</name>